<protein>
    <recommendedName>
        <fullName evidence="1">5'-methylthioadenosine/S-adenosylhomocysteine nucleosidase</fullName>
        <shortName evidence="1">MTA/SAH nucleosidase</shortName>
        <shortName evidence="1">MTAN</shortName>
        <ecNumber evidence="1">3.2.2.9</ecNumber>
    </recommendedName>
    <alternativeName>
        <fullName evidence="1">5'-deoxyadenosine nucleosidase</fullName>
        <shortName evidence="1">DOA nucleosidase</shortName>
        <shortName evidence="1">dAdo nucleosidase</shortName>
    </alternativeName>
    <alternativeName>
        <fullName evidence="1">5'-methylthioadenosine nucleosidase</fullName>
        <shortName evidence="1">MTA nucleosidase</shortName>
    </alternativeName>
    <alternativeName>
        <fullName evidence="1">S-adenosylhomocysteine nucleosidase</fullName>
        <shortName evidence="1">AdoHcy nucleosidase</shortName>
        <shortName evidence="1">SAH nucleosidase</shortName>
        <shortName evidence="1">SRH nucleosidase</shortName>
    </alternativeName>
</protein>
<keyword id="KW-0028">Amino-acid biosynthesis</keyword>
<keyword id="KW-0378">Hydrolase</keyword>
<keyword id="KW-0486">Methionine biosynthesis</keyword>
<accession>C3P964</accession>
<comment type="function">
    <text evidence="1">Catalyzes the irreversible cleavage of the glycosidic bond in both 5'-methylthioadenosine (MTA) and S-adenosylhomocysteine (SAH/AdoHcy) to adenine and the corresponding thioribose, 5'-methylthioribose and S-ribosylhomocysteine, respectively. Also cleaves 5'-deoxyadenosine, a toxic by-product of radical S-adenosylmethionine (SAM) enzymes, into 5-deoxyribose and adenine.</text>
</comment>
<comment type="catalytic activity">
    <reaction evidence="1">
        <text>S-adenosyl-L-homocysteine + H2O = S-(5-deoxy-D-ribos-5-yl)-L-homocysteine + adenine</text>
        <dbReference type="Rhea" id="RHEA:17805"/>
        <dbReference type="ChEBI" id="CHEBI:15377"/>
        <dbReference type="ChEBI" id="CHEBI:16708"/>
        <dbReference type="ChEBI" id="CHEBI:57856"/>
        <dbReference type="ChEBI" id="CHEBI:58195"/>
        <dbReference type="EC" id="3.2.2.9"/>
    </reaction>
</comment>
<comment type="catalytic activity">
    <reaction evidence="1">
        <text>S-methyl-5'-thioadenosine + H2O = 5-(methylsulfanyl)-D-ribose + adenine</text>
        <dbReference type="Rhea" id="RHEA:13617"/>
        <dbReference type="ChEBI" id="CHEBI:15377"/>
        <dbReference type="ChEBI" id="CHEBI:16708"/>
        <dbReference type="ChEBI" id="CHEBI:17509"/>
        <dbReference type="ChEBI" id="CHEBI:78440"/>
        <dbReference type="EC" id="3.2.2.9"/>
    </reaction>
</comment>
<comment type="catalytic activity">
    <reaction evidence="1">
        <text>5'-deoxyadenosine + H2O = 5-deoxy-D-ribose + adenine</text>
        <dbReference type="Rhea" id="RHEA:29859"/>
        <dbReference type="ChEBI" id="CHEBI:15377"/>
        <dbReference type="ChEBI" id="CHEBI:16708"/>
        <dbReference type="ChEBI" id="CHEBI:17319"/>
        <dbReference type="ChEBI" id="CHEBI:149540"/>
        <dbReference type="EC" id="3.2.2.9"/>
    </reaction>
    <physiologicalReaction direction="left-to-right" evidence="1">
        <dbReference type="Rhea" id="RHEA:29860"/>
    </physiologicalReaction>
</comment>
<comment type="pathway">
    <text evidence="1">Amino-acid biosynthesis; L-methionine biosynthesis via salvage pathway; S-methyl-5-thio-alpha-D-ribose 1-phosphate from S-methyl-5'-thioadenosine (hydrolase route): step 1/2.</text>
</comment>
<comment type="similarity">
    <text evidence="1">Belongs to the PNP/UDP phosphorylase family. MtnN subfamily.</text>
</comment>
<sequence length="231" mass="25255">MRIAVIGAMEEEVRILRDKLEQAETETVAGCEFTKGQLAGHEVILLKSGIGKVNAAMSTTILLERYKPEKVINTGSAGGFHHSLNVGDVVISTEVRHHDVDVTAFNYEYGQVPGMPPGFKADEALVALAEKCMQAEENIQVVKGMIATGDSFMSDPNRVAAIRDKFENLYAVEMEAAAVAQVCHQYEVPFVIIRALSDIAGKESNVSFDQFLDQAALHSTNFIVKVLEELK</sequence>
<evidence type="ECO:0000255" key="1">
    <source>
        <dbReference type="HAMAP-Rule" id="MF_01684"/>
    </source>
</evidence>
<reference key="1">
    <citation type="submission" date="2009-04" db="EMBL/GenBank/DDBJ databases">
        <title>Genome sequence of Bacillus anthracis A0248.</title>
        <authorList>
            <person name="Dodson R.J."/>
            <person name="Munk A.C."/>
            <person name="Bruce D."/>
            <person name="Detter C."/>
            <person name="Tapia R."/>
            <person name="Sutton G."/>
            <person name="Sims D."/>
            <person name="Brettin T."/>
        </authorList>
    </citation>
    <scope>NUCLEOTIDE SEQUENCE [LARGE SCALE GENOMIC DNA]</scope>
    <source>
        <strain>A0248</strain>
    </source>
</reference>
<gene>
    <name evidence="1" type="primary">mtnN</name>
    <name type="ordered locus">BAA_4622</name>
</gene>
<name>MTNN_BACAA</name>
<proteinExistence type="inferred from homology"/>
<dbReference type="EC" id="3.2.2.9" evidence="1"/>
<dbReference type="EMBL" id="CP001598">
    <property type="protein sequence ID" value="ACQ50805.1"/>
    <property type="molecule type" value="Genomic_DNA"/>
</dbReference>
<dbReference type="RefSeq" id="WP_001217039.1">
    <property type="nucleotide sequence ID" value="NC_012659.1"/>
</dbReference>
<dbReference type="SMR" id="C3P964"/>
<dbReference type="GeneID" id="75087509"/>
<dbReference type="KEGG" id="bai:BAA_4622"/>
<dbReference type="HOGENOM" id="CLU_031248_2_2_9"/>
<dbReference type="UniPathway" id="UPA00904">
    <property type="reaction ID" value="UER00871"/>
</dbReference>
<dbReference type="GO" id="GO:0005829">
    <property type="term" value="C:cytosol"/>
    <property type="evidence" value="ECO:0007669"/>
    <property type="project" value="TreeGrafter"/>
</dbReference>
<dbReference type="GO" id="GO:0008782">
    <property type="term" value="F:adenosylhomocysteine nucleosidase activity"/>
    <property type="evidence" value="ECO:0007669"/>
    <property type="project" value="UniProtKB-UniRule"/>
</dbReference>
<dbReference type="GO" id="GO:0008930">
    <property type="term" value="F:methylthioadenosine nucleosidase activity"/>
    <property type="evidence" value="ECO:0007669"/>
    <property type="project" value="UniProtKB-UniRule"/>
</dbReference>
<dbReference type="GO" id="GO:0019509">
    <property type="term" value="P:L-methionine salvage from methylthioadenosine"/>
    <property type="evidence" value="ECO:0007669"/>
    <property type="project" value="UniProtKB-UniRule"/>
</dbReference>
<dbReference type="GO" id="GO:0019284">
    <property type="term" value="P:L-methionine salvage from S-adenosylmethionine"/>
    <property type="evidence" value="ECO:0007669"/>
    <property type="project" value="TreeGrafter"/>
</dbReference>
<dbReference type="GO" id="GO:0009164">
    <property type="term" value="P:nucleoside catabolic process"/>
    <property type="evidence" value="ECO:0007669"/>
    <property type="project" value="InterPro"/>
</dbReference>
<dbReference type="CDD" id="cd09008">
    <property type="entry name" value="MTAN"/>
    <property type="match status" value="1"/>
</dbReference>
<dbReference type="FunFam" id="3.40.50.1580:FF:000001">
    <property type="entry name" value="MTA/SAH nucleosidase family protein"/>
    <property type="match status" value="1"/>
</dbReference>
<dbReference type="Gene3D" id="3.40.50.1580">
    <property type="entry name" value="Nucleoside phosphorylase domain"/>
    <property type="match status" value="1"/>
</dbReference>
<dbReference type="HAMAP" id="MF_01684">
    <property type="entry name" value="Salvage_MtnN"/>
    <property type="match status" value="1"/>
</dbReference>
<dbReference type="InterPro" id="IPR010049">
    <property type="entry name" value="MTA_SAH_Nsdase"/>
</dbReference>
<dbReference type="InterPro" id="IPR000845">
    <property type="entry name" value="Nucleoside_phosphorylase_d"/>
</dbReference>
<dbReference type="InterPro" id="IPR035994">
    <property type="entry name" value="Nucleoside_phosphorylase_sf"/>
</dbReference>
<dbReference type="NCBIfam" id="TIGR01704">
    <property type="entry name" value="MTA_SAH-Nsdase"/>
    <property type="match status" value="1"/>
</dbReference>
<dbReference type="NCBIfam" id="NF004079">
    <property type="entry name" value="PRK05584.1"/>
    <property type="match status" value="1"/>
</dbReference>
<dbReference type="PANTHER" id="PTHR46832">
    <property type="entry name" value="5'-METHYLTHIOADENOSINE/S-ADENOSYLHOMOCYSTEINE NUCLEOSIDASE"/>
    <property type="match status" value="1"/>
</dbReference>
<dbReference type="PANTHER" id="PTHR46832:SF1">
    <property type="entry name" value="5'-METHYLTHIOADENOSINE_S-ADENOSYLHOMOCYSTEINE NUCLEOSIDASE"/>
    <property type="match status" value="1"/>
</dbReference>
<dbReference type="Pfam" id="PF01048">
    <property type="entry name" value="PNP_UDP_1"/>
    <property type="match status" value="1"/>
</dbReference>
<dbReference type="SUPFAM" id="SSF53167">
    <property type="entry name" value="Purine and uridine phosphorylases"/>
    <property type="match status" value="1"/>
</dbReference>
<feature type="chain" id="PRO_1000187407" description="5'-methylthioadenosine/S-adenosylhomocysteine nucleosidase">
    <location>
        <begin position="1"/>
        <end position="231"/>
    </location>
</feature>
<feature type="active site" description="Proton acceptor" evidence="1">
    <location>
        <position position="12"/>
    </location>
</feature>
<feature type="active site" description="Proton donor" evidence="1">
    <location>
        <position position="198"/>
    </location>
</feature>
<feature type="binding site" evidence="1">
    <location>
        <position position="78"/>
    </location>
    <ligand>
        <name>substrate</name>
    </ligand>
</feature>
<feature type="binding site" evidence="1">
    <location>
        <position position="153"/>
    </location>
    <ligand>
        <name>substrate</name>
    </ligand>
</feature>
<feature type="binding site" evidence="1">
    <location>
        <begin position="174"/>
        <end position="175"/>
    </location>
    <ligand>
        <name>substrate</name>
    </ligand>
</feature>
<organism>
    <name type="scientific">Bacillus anthracis (strain A0248)</name>
    <dbReference type="NCBI Taxonomy" id="592021"/>
    <lineage>
        <taxon>Bacteria</taxon>
        <taxon>Bacillati</taxon>
        <taxon>Bacillota</taxon>
        <taxon>Bacilli</taxon>
        <taxon>Bacillales</taxon>
        <taxon>Bacillaceae</taxon>
        <taxon>Bacillus</taxon>
        <taxon>Bacillus cereus group</taxon>
    </lineage>
</organism>